<feature type="initiator methionine" description="Removed" evidence="1">
    <location>
        <position position="1"/>
    </location>
</feature>
<feature type="chain" id="PRO_0000436937" description="Inactive squalene synthase 2">
    <location>
        <begin position="2"/>
        <end position="413"/>
    </location>
</feature>
<feature type="transmembrane region" description="Helical" evidence="2">
    <location>
        <begin position="283"/>
        <end position="303"/>
    </location>
</feature>
<feature type="transmembrane region" description="Helical" evidence="2">
    <location>
        <begin position="390"/>
        <end position="410"/>
    </location>
</feature>
<feature type="modified residue" description="N-acetylglycine" evidence="1">
    <location>
        <position position="2"/>
    </location>
</feature>
<feature type="mutagenesis site" description="No squalene synthase activity." evidence="3">
    <original>S</original>
    <variation>F</variation>
    <location>
        <position position="287"/>
    </location>
</feature>
<feature type="sequence conflict" description="In Ref. 1; AAB61927." evidence="5" ref="1">
    <original>A</original>
    <variation>T</variation>
    <location>
        <position position="300"/>
    </location>
</feature>
<feature type="sequence conflict" description="In Ref. 1; AAB61927." evidence="5" ref="1">
    <original>L</original>
    <variation>M</variation>
    <location>
        <position position="315"/>
    </location>
</feature>
<feature type="sequence conflict" description="In Ref. 1; AAB61927." evidence="5" ref="1">
    <original>FCKENGG</original>
    <variation>VCRENGV</variation>
    <location>
        <begin position="368"/>
        <end position="374"/>
    </location>
</feature>
<feature type="sequence conflict" description="In Ref. 1; AAB61927." evidence="5" ref="1">
    <original>C</original>
    <variation>R</variation>
    <location>
        <position position="412"/>
    </location>
</feature>
<sequence length="413" mass="47183">MGSLSTILRHPDELYPLLKLKLAITKAQKQIPLEPHLAFCYSILHKVSKSFSLVIQQLGTELRNAVCVFYLILRALDTVEDDTSVPVEIKVPILIAFHRHIYDGDWHFSCGTKEYKLLMDQFHHVSAAFLKLEKGYQEAIEDITKRMGAGMAKFICKEVETIDDYDEYCHYAAGLVGLGLSKIFIASELEILTPDWKQISNSTGLFLQKTNIIKDYLEDINERPKSRMFWPREIWGKYVDKLEDFKNEEKATKAVQCLNEMVTNALNHVEDCLKSLASLRDPAIFQSCAIPQIVAIGTLALCYNNVQVFRGVVRLRRGLIAKVIDRTKTMDDVYGAFYDFSCMLQTKVDNNDPNAMKTLNRLETIKKFCKENGGLHKRKSYVNDETQSKAIFVVMFVLLLAIVVVYLKANQCK</sequence>
<reference key="1">
    <citation type="journal article" date="1997" name="Eur. J. Biochem.">
        <title>Cloning and characterization of the Arabidopsis thaliana SQS1 gene encoding squalene synthase -- involvement of the C-terminal region of the enzyme in the channeling of squalene through the sterol pathway.</title>
        <authorList>
            <person name="Kribii R."/>
            <person name="Arro M."/>
            <person name="Del Arco A."/>
            <person name="Gonzalez V."/>
            <person name="Balcells L."/>
            <person name="Delourme D."/>
            <person name="Ferrer A."/>
            <person name="Karst F."/>
            <person name="Boronat A."/>
        </authorList>
    </citation>
    <scope>NUCLEOTIDE SEQUENCE [GENOMIC DNA]</scope>
    <source>
        <strain>cv. Columbia</strain>
    </source>
</reference>
<reference key="2">
    <citation type="journal article" date="1999" name="Nature">
        <title>Sequence and analysis of chromosome 4 of the plant Arabidopsis thaliana.</title>
        <authorList>
            <person name="Mayer K.F.X."/>
            <person name="Schueller C."/>
            <person name="Wambutt R."/>
            <person name="Murphy G."/>
            <person name="Volckaert G."/>
            <person name="Pohl T."/>
            <person name="Duesterhoeft A."/>
            <person name="Stiekema W."/>
            <person name="Entian K.-D."/>
            <person name="Terryn N."/>
            <person name="Harris B."/>
            <person name="Ansorge W."/>
            <person name="Brandt P."/>
            <person name="Grivell L.A."/>
            <person name="Rieger M."/>
            <person name="Weichselgartner M."/>
            <person name="de Simone V."/>
            <person name="Obermaier B."/>
            <person name="Mache R."/>
            <person name="Mueller M."/>
            <person name="Kreis M."/>
            <person name="Delseny M."/>
            <person name="Puigdomenech P."/>
            <person name="Watson M."/>
            <person name="Schmidtheini T."/>
            <person name="Reichert B."/>
            <person name="Portetelle D."/>
            <person name="Perez-Alonso M."/>
            <person name="Boutry M."/>
            <person name="Bancroft I."/>
            <person name="Vos P."/>
            <person name="Hoheisel J."/>
            <person name="Zimmermann W."/>
            <person name="Wedler H."/>
            <person name="Ridley P."/>
            <person name="Langham S.-A."/>
            <person name="McCullagh B."/>
            <person name="Bilham L."/>
            <person name="Robben J."/>
            <person name="van der Schueren J."/>
            <person name="Grymonprez B."/>
            <person name="Chuang Y.-J."/>
            <person name="Vandenbussche F."/>
            <person name="Braeken M."/>
            <person name="Weltjens I."/>
            <person name="Voet M."/>
            <person name="Bastiaens I."/>
            <person name="Aert R."/>
            <person name="Defoor E."/>
            <person name="Weitzenegger T."/>
            <person name="Bothe G."/>
            <person name="Ramsperger U."/>
            <person name="Hilbert H."/>
            <person name="Braun M."/>
            <person name="Holzer E."/>
            <person name="Brandt A."/>
            <person name="Peters S."/>
            <person name="van Staveren M."/>
            <person name="Dirkse W."/>
            <person name="Mooijman P."/>
            <person name="Klein Lankhorst R."/>
            <person name="Rose M."/>
            <person name="Hauf J."/>
            <person name="Koetter P."/>
            <person name="Berneiser S."/>
            <person name="Hempel S."/>
            <person name="Feldpausch M."/>
            <person name="Lamberth S."/>
            <person name="Van den Daele H."/>
            <person name="De Keyser A."/>
            <person name="Buysshaert C."/>
            <person name="Gielen J."/>
            <person name="Villarroel R."/>
            <person name="De Clercq R."/>
            <person name="van Montagu M."/>
            <person name="Rogers J."/>
            <person name="Cronin A."/>
            <person name="Quail M.A."/>
            <person name="Bray-Allen S."/>
            <person name="Clark L."/>
            <person name="Doggett J."/>
            <person name="Hall S."/>
            <person name="Kay M."/>
            <person name="Lennard N."/>
            <person name="McLay K."/>
            <person name="Mayes R."/>
            <person name="Pettett A."/>
            <person name="Rajandream M.A."/>
            <person name="Lyne M."/>
            <person name="Benes V."/>
            <person name="Rechmann S."/>
            <person name="Borkova D."/>
            <person name="Bloecker H."/>
            <person name="Scharfe M."/>
            <person name="Grimm M."/>
            <person name="Loehnert T.-H."/>
            <person name="Dose S."/>
            <person name="de Haan M."/>
            <person name="Maarse A.C."/>
            <person name="Schaefer M."/>
            <person name="Mueller-Auer S."/>
            <person name="Gabel C."/>
            <person name="Fuchs M."/>
            <person name="Fartmann B."/>
            <person name="Granderath K."/>
            <person name="Dauner D."/>
            <person name="Herzl A."/>
            <person name="Neumann S."/>
            <person name="Argiriou A."/>
            <person name="Vitale D."/>
            <person name="Liguori R."/>
            <person name="Piravandi E."/>
            <person name="Massenet O."/>
            <person name="Quigley F."/>
            <person name="Clabauld G."/>
            <person name="Muendlein A."/>
            <person name="Felber R."/>
            <person name="Schnabl S."/>
            <person name="Hiller R."/>
            <person name="Schmidt W."/>
            <person name="Lecharny A."/>
            <person name="Aubourg S."/>
            <person name="Chefdor F."/>
            <person name="Cooke R."/>
            <person name="Berger C."/>
            <person name="Monfort A."/>
            <person name="Casacuberta E."/>
            <person name="Gibbons T."/>
            <person name="Weber N."/>
            <person name="Vandenbol M."/>
            <person name="Bargues M."/>
            <person name="Terol J."/>
            <person name="Torres A."/>
            <person name="Perez-Perez A."/>
            <person name="Purnelle B."/>
            <person name="Bent E."/>
            <person name="Johnson S."/>
            <person name="Tacon D."/>
            <person name="Jesse T."/>
            <person name="Heijnen L."/>
            <person name="Schwarz S."/>
            <person name="Scholler P."/>
            <person name="Heber S."/>
            <person name="Francs P."/>
            <person name="Bielke C."/>
            <person name="Frishman D."/>
            <person name="Haase D."/>
            <person name="Lemcke K."/>
            <person name="Mewes H.-W."/>
            <person name="Stocker S."/>
            <person name="Zaccaria P."/>
            <person name="Bevan M."/>
            <person name="Wilson R.K."/>
            <person name="de la Bastide M."/>
            <person name="Habermann K."/>
            <person name="Parnell L."/>
            <person name="Dedhia N."/>
            <person name="Gnoj L."/>
            <person name="Schutz K."/>
            <person name="Huang E."/>
            <person name="Spiegel L."/>
            <person name="Sekhon M."/>
            <person name="Murray J."/>
            <person name="Sheet P."/>
            <person name="Cordes M."/>
            <person name="Abu-Threideh J."/>
            <person name="Stoneking T."/>
            <person name="Kalicki J."/>
            <person name="Graves T."/>
            <person name="Harmon G."/>
            <person name="Edwards J."/>
            <person name="Latreille P."/>
            <person name="Courtney L."/>
            <person name="Cloud J."/>
            <person name="Abbott A."/>
            <person name="Scott K."/>
            <person name="Johnson D."/>
            <person name="Minx P."/>
            <person name="Bentley D."/>
            <person name="Fulton B."/>
            <person name="Miller N."/>
            <person name="Greco T."/>
            <person name="Kemp K."/>
            <person name="Kramer J."/>
            <person name="Fulton L."/>
            <person name="Mardis E."/>
            <person name="Dante M."/>
            <person name="Pepin K."/>
            <person name="Hillier L.W."/>
            <person name="Nelson J."/>
            <person name="Spieth J."/>
            <person name="Ryan E."/>
            <person name="Andrews S."/>
            <person name="Geisel C."/>
            <person name="Layman D."/>
            <person name="Du H."/>
            <person name="Ali J."/>
            <person name="Berghoff A."/>
            <person name="Jones K."/>
            <person name="Drone K."/>
            <person name="Cotton M."/>
            <person name="Joshu C."/>
            <person name="Antonoiu B."/>
            <person name="Zidanic M."/>
            <person name="Strong C."/>
            <person name="Sun H."/>
            <person name="Lamar B."/>
            <person name="Yordan C."/>
            <person name="Ma P."/>
            <person name="Zhong J."/>
            <person name="Preston R."/>
            <person name="Vil D."/>
            <person name="Shekher M."/>
            <person name="Matero A."/>
            <person name="Shah R."/>
            <person name="Swaby I.K."/>
            <person name="O'Shaughnessy A."/>
            <person name="Rodriguez M."/>
            <person name="Hoffman J."/>
            <person name="Till S."/>
            <person name="Granat S."/>
            <person name="Shohdy N."/>
            <person name="Hasegawa A."/>
            <person name="Hameed A."/>
            <person name="Lodhi M."/>
            <person name="Johnson A."/>
            <person name="Chen E."/>
            <person name="Marra M.A."/>
            <person name="Martienssen R."/>
            <person name="McCombie W.R."/>
        </authorList>
    </citation>
    <scope>NUCLEOTIDE SEQUENCE [LARGE SCALE GENOMIC DNA]</scope>
    <source>
        <strain>cv. Columbia</strain>
    </source>
</reference>
<reference key="3">
    <citation type="journal article" date="2017" name="Plant J.">
        <title>Araport11: a complete reannotation of the Arabidopsis thaliana reference genome.</title>
        <authorList>
            <person name="Cheng C.Y."/>
            <person name="Krishnakumar V."/>
            <person name="Chan A.P."/>
            <person name="Thibaud-Nissen F."/>
            <person name="Schobel S."/>
            <person name="Town C.D."/>
        </authorList>
    </citation>
    <scope>GENOME REANNOTATION</scope>
    <source>
        <strain>cv. Columbia</strain>
    </source>
</reference>
<reference key="4">
    <citation type="journal article" date="2003" name="Plant Mol. Biol.">
        <title>Genome organization in Arabidopsis thaliana: a survey for genes involved in isoprenoid and chlorophyll metabolism.</title>
        <authorList>
            <person name="Lange B.M."/>
            <person name="Ghassemian M."/>
        </authorList>
    </citation>
    <scope>REVIEW</scope>
</reference>
<reference key="5">
    <citation type="journal article" date="2008" name="Plant Mol. Biol.">
        <title>Arabidopsis thaliana contains a single gene encoding squalene synthase.</title>
        <authorList>
            <person name="Busquets A."/>
            <person name="Keim V."/>
            <person name="Closa M."/>
            <person name="del Arco A."/>
            <person name="Boronat A."/>
            <person name="Arro M."/>
            <person name="Ferrer A."/>
        </authorList>
    </citation>
    <scope>CAUTION</scope>
    <scope>MUTAGENESIS OF SER-287</scope>
    <scope>TISSUE SPECIFICITY</scope>
    <scope>DEVELOPMENTAL STAGE</scope>
</reference>
<gene>
    <name evidence="7" type="primary">SQS2</name>
    <name evidence="6" type="ordered locus">At4g34650</name>
    <name evidence="8" type="ORF">T4L20.230</name>
</gene>
<evidence type="ECO:0000250" key="1">
    <source>
        <dbReference type="UniProtKB" id="P53799"/>
    </source>
</evidence>
<evidence type="ECO:0000255" key="2"/>
<evidence type="ECO:0000269" key="3">
    <source>
    </source>
</evidence>
<evidence type="ECO:0000303" key="4">
    <source>
    </source>
</evidence>
<evidence type="ECO:0000305" key="5"/>
<evidence type="ECO:0000312" key="6">
    <source>
        <dbReference type="Araport" id="AT4G34650"/>
    </source>
</evidence>
<evidence type="ECO:0000312" key="7">
    <source>
        <dbReference type="EMBL" id="AEE86404.1"/>
    </source>
</evidence>
<evidence type="ECO:0000312" key="8">
    <source>
        <dbReference type="EMBL" id="CAA18844.2"/>
    </source>
</evidence>
<keyword id="KW-0007">Acetylation</keyword>
<keyword id="KW-0256">Endoplasmic reticulum</keyword>
<keyword id="KW-0460">Magnesium</keyword>
<keyword id="KW-0464">Manganese</keyword>
<keyword id="KW-0472">Membrane</keyword>
<keyword id="KW-1185">Reference proteome</keyword>
<keyword id="KW-0812">Transmembrane</keyword>
<keyword id="KW-1133">Transmembrane helix</keyword>
<protein>
    <recommendedName>
        <fullName evidence="4">Inactive squalene synthase 2</fullName>
    </recommendedName>
</protein>
<dbReference type="EMBL" id="AF004396">
    <property type="protein sequence ID" value="AAB61927.1"/>
    <property type="molecule type" value="Genomic_DNA"/>
</dbReference>
<dbReference type="EMBL" id="AL023094">
    <property type="protein sequence ID" value="CAA18844.2"/>
    <property type="molecule type" value="Genomic_DNA"/>
</dbReference>
<dbReference type="EMBL" id="AL161585">
    <property type="protein sequence ID" value="CAB80182.1"/>
    <property type="molecule type" value="Genomic_DNA"/>
</dbReference>
<dbReference type="EMBL" id="CP002687">
    <property type="protein sequence ID" value="AEE86404.1"/>
    <property type="molecule type" value="Genomic_DNA"/>
</dbReference>
<dbReference type="PIR" id="E85408">
    <property type="entry name" value="E85408"/>
</dbReference>
<dbReference type="PIR" id="T05285">
    <property type="entry name" value="T05285"/>
</dbReference>
<dbReference type="PIR" id="T44924">
    <property type="entry name" value="T44924"/>
</dbReference>
<dbReference type="RefSeq" id="NP_195191.2">
    <property type="nucleotide sequence ID" value="NM_119631.3"/>
</dbReference>
<dbReference type="SMR" id="O65688"/>
<dbReference type="FunCoup" id="O65688">
    <property type="interactions" value="869"/>
</dbReference>
<dbReference type="STRING" id="3702.O65688"/>
<dbReference type="iPTMnet" id="O65688"/>
<dbReference type="PaxDb" id="3702-AT4G34650.1"/>
<dbReference type="ProteomicsDB" id="230505"/>
<dbReference type="EnsemblPlants" id="AT4G34650.1">
    <property type="protein sequence ID" value="AT4G34650.1"/>
    <property type="gene ID" value="AT4G34650"/>
</dbReference>
<dbReference type="GeneID" id="829617"/>
<dbReference type="Gramene" id="AT4G34650.1">
    <property type="protein sequence ID" value="AT4G34650.1"/>
    <property type="gene ID" value="AT4G34650"/>
</dbReference>
<dbReference type="KEGG" id="ath:AT4G34650"/>
<dbReference type="Araport" id="AT4G34650"/>
<dbReference type="TAIR" id="AT4G34650">
    <property type="gene designation" value="SQS2"/>
</dbReference>
<dbReference type="eggNOG" id="KOG1459">
    <property type="taxonomic scope" value="Eukaryota"/>
</dbReference>
<dbReference type="HOGENOM" id="CLU_031981_0_0_1"/>
<dbReference type="InParanoid" id="O65688"/>
<dbReference type="OMA" id="DYAEDCE"/>
<dbReference type="PhylomeDB" id="O65688"/>
<dbReference type="BioCyc" id="MetaCyc:AT4G34650-MONOMER"/>
<dbReference type="BRENDA" id="2.5.1.21">
    <property type="organism ID" value="399"/>
</dbReference>
<dbReference type="PRO" id="PR:O65688"/>
<dbReference type="Proteomes" id="UP000006548">
    <property type="component" value="Chromosome 4"/>
</dbReference>
<dbReference type="ExpressionAtlas" id="O65688">
    <property type="expression patterns" value="baseline and differential"/>
</dbReference>
<dbReference type="GO" id="GO:0005789">
    <property type="term" value="C:endoplasmic reticulum membrane"/>
    <property type="evidence" value="ECO:0000250"/>
    <property type="project" value="UniProtKB"/>
</dbReference>
<dbReference type="GO" id="GO:0045338">
    <property type="term" value="P:farnesyl diphosphate metabolic process"/>
    <property type="evidence" value="ECO:0007669"/>
    <property type="project" value="InterPro"/>
</dbReference>
<dbReference type="GO" id="GO:0016126">
    <property type="term" value="P:sterol biosynthetic process"/>
    <property type="evidence" value="ECO:0000250"/>
    <property type="project" value="TAIR"/>
</dbReference>
<dbReference type="CDD" id="cd00683">
    <property type="entry name" value="Trans_IPPS_HH"/>
    <property type="match status" value="1"/>
</dbReference>
<dbReference type="FunFam" id="1.10.600.10:FF:000012">
    <property type="entry name" value="Squalene synthase 1"/>
    <property type="match status" value="1"/>
</dbReference>
<dbReference type="Gene3D" id="1.10.600.10">
    <property type="entry name" value="Farnesyl Diphosphate Synthase"/>
    <property type="match status" value="1"/>
</dbReference>
<dbReference type="InterPro" id="IPR008949">
    <property type="entry name" value="Isoprenoid_synthase_dom_sf"/>
</dbReference>
<dbReference type="InterPro" id="IPR002060">
    <property type="entry name" value="Squ/phyt_synthse"/>
</dbReference>
<dbReference type="InterPro" id="IPR006449">
    <property type="entry name" value="Squal_synth-like"/>
</dbReference>
<dbReference type="InterPro" id="IPR044844">
    <property type="entry name" value="Trans_IPPS_euk-type"/>
</dbReference>
<dbReference type="InterPro" id="IPR033904">
    <property type="entry name" value="Trans_IPPS_HH"/>
</dbReference>
<dbReference type="NCBIfam" id="TIGR01559">
    <property type="entry name" value="squal_synth"/>
    <property type="match status" value="1"/>
</dbReference>
<dbReference type="PANTHER" id="PTHR11626">
    <property type="entry name" value="FARNESYL-DIPHOSPHATE FARNESYLTRANSFERASE"/>
    <property type="match status" value="1"/>
</dbReference>
<dbReference type="PANTHER" id="PTHR11626:SF3">
    <property type="entry name" value="INACTIVE SQUALENE SYNTHASE 2"/>
    <property type="match status" value="1"/>
</dbReference>
<dbReference type="Pfam" id="PF00494">
    <property type="entry name" value="SQS_PSY"/>
    <property type="match status" value="1"/>
</dbReference>
<dbReference type="SFLD" id="SFLDS00005">
    <property type="entry name" value="Isoprenoid_Synthase_Type_I"/>
    <property type="match status" value="1"/>
</dbReference>
<dbReference type="SFLD" id="SFLDG01018">
    <property type="entry name" value="Squalene/Phytoene_Synthase_Lik"/>
    <property type="match status" value="1"/>
</dbReference>
<dbReference type="SUPFAM" id="SSF48576">
    <property type="entry name" value="Terpenoid synthases"/>
    <property type="match status" value="1"/>
</dbReference>
<accession>O65688</accession>
<accession>O23118</accession>
<organism>
    <name type="scientific">Arabidopsis thaliana</name>
    <name type="common">Mouse-ear cress</name>
    <dbReference type="NCBI Taxonomy" id="3702"/>
    <lineage>
        <taxon>Eukaryota</taxon>
        <taxon>Viridiplantae</taxon>
        <taxon>Streptophyta</taxon>
        <taxon>Embryophyta</taxon>
        <taxon>Tracheophyta</taxon>
        <taxon>Spermatophyta</taxon>
        <taxon>Magnoliopsida</taxon>
        <taxon>eudicotyledons</taxon>
        <taxon>Gunneridae</taxon>
        <taxon>Pentapetalae</taxon>
        <taxon>rosids</taxon>
        <taxon>malvids</taxon>
        <taxon>Brassicales</taxon>
        <taxon>Brassicaceae</taxon>
        <taxon>Camelineae</taxon>
        <taxon>Arabidopsis</taxon>
    </lineage>
</organism>
<proteinExistence type="evidence at protein level"/>
<name>FDFT2_ARATH</name>
<comment type="cofactor">
    <cofactor evidence="1">
        <name>Mg(2+)</name>
        <dbReference type="ChEBI" id="CHEBI:18420"/>
    </cofactor>
    <cofactor evidence="1">
        <name>Mn(2+)</name>
        <dbReference type="ChEBI" id="CHEBI:29035"/>
    </cofactor>
</comment>
<comment type="subcellular location">
    <subcellularLocation>
        <location evidence="1">Endoplasmic reticulum membrane</location>
        <topology evidence="2">Multi-pass membrane protein</topology>
    </subcellularLocation>
</comment>
<comment type="tissue specificity">
    <text evidence="3">Mostly expressed in hypocotyls, leaves and cotyledons, and, to a lower extent, in stems.</text>
</comment>
<comment type="developmental stage">
    <text evidence="3">Primarily detected in the vascular tissue of leaf and cotyledon petioles, and the hypocotyl of one week-old seedlings.</text>
</comment>
<comment type="similarity">
    <text evidence="5">Belongs to the phytoene/squalene synthase family.</text>
</comment>
<comment type="caution">
    <text evidence="3">Does not show squalene synthase activity.</text>
</comment>